<evidence type="ECO:0000250" key="1"/>
<evidence type="ECO:0000305" key="2"/>
<proteinExistence type="inferred from homology"/>
<gene>
    <name type="primary">MED10</name>
    <name type="ORF">AAEL014501</name>
</gene>
<sequence length="130" mass="15101">MASPLENLENHLEMFIENVRQIRIIVSDFQPQGQNVLNQKIQSLVTGLQEIDKLKNQVDVNVPLEVFDYIDQGRNPQLYTKDCIDKALTKNEEVKGKIDSYRKFKSNLMKELDETFPTEIAKYKAIRGDE</sequence>
<keyword id="KW-0010">Activator</keyword>
<keyword id="KW-0539">Nucleus</keyword>
<keyword id="KW-1185">Reference proteome</keyword>
<keyword id="KW-0804">Transcription</keyword>
<keyword id="KW-0805">Transcription regulation</keyword>
<organism>
    <name type="scientific">Aedes aegypti</name>
    <name type="common">Yellowfever mosquito</name>
    <name type="synonym">Culex aegypti</name>
    <dbReference type="NCBI Taxonomy" id="7159"/>
    <lineage>
        <taxon>Eukaryota</taxon>
        <taxon>Metazoa</taxon>
        <taxon>Ecdysozoa</taxon>
        <taxon>Arthropoda</taxon>
        <taxon>Hexapoda</taxon>
        <taxon>Insecta</taxon>
        <taxon>Pterygota</taxon>
        <taxon>Neoptera</taxon>
        <taxon>Endopterygota</taxon>
        <taxon>Diptera</taxon>
        <taxon>Nematocera</taxon>
        <taxon>Culicoidea</taxon>
        <taxon>Culicidae</taxon>
        <taxon>Culicinae</taxon>
        <taxon>Aedini</taxon>
        <taxon>Aedes</taxon>
        <taxon>Stegomyia</taxon>
    </lineage>
</organism>
<reference key="1">
    <citation type="journal article" date="2007" name="Science">
        <title>Genome sequence of Aedes aegypti, a major arbovirus vector.</title>
        <authorList>
            <person name="Nene V."/>
            <person name="Wortman J.R."/>
            <person name="Lawson D."/>
            <person name="Haas B.J."/>
            <person name="Kodira C.D."/>
            <person name="Tu Z.J."/>
            <person name="Loftus B.J."/>
            <person name="Xi Z."/>
            <person name="Megy K."/>
            <person name="Grabherr M."/>
            <person name="Ren Q."/>
            <person name="Zdobnov E.M."/>
            <person name="Lobo N.F."/>
            <person name="Campbell K.S."/>
            <person name="Brown S.E."/>
            <person name="Bonaldo M.F."/>
            <person name="Zhu J."/>
            <person name="Sinkins S.P."/>
            <person name="Hogenkamp D.G."/>
            <person name="Amedeo P."/>
            <person name="Arensburger P."/>
            <person name="Atkinson P.W."/>
            <person name="Bidwell S.L."/>
            <person name="Biedler J."/>
            <person name="Birney E."/>
            <person name="Bruggner R.V."/>
            <person name="Costas J."/>
            <person name="Coy M.R."/>
            <person name="Crabtree J."/>
            <person name="Crawford M."/>
            <person name="DeBruyn B."/>
            <person name="DeCaprio D."/>
            <person name="Eiglmeier K."/>
            <person name="Eisenstadt E."/>
            <person name="El-Dorry H."/>
            <person name="Gelbart W.M."/>
            <person name="Gomes S.L."/>
            <person name="Hammond M."/>
            <person name="Hannick L.I."/>
            <person name="Hogan J.R."/>
            <person name="Holmes M.H."/>
            <person name="Jaffe D."/>
            <person name="Johnston S.J."/>
            <person name="Kennedy R.C."/>
            <person name="Koo H."/>
            <person name="Kravitz S."/>
            <person name="Kriventseva E.V."/>
            <person name="Kulp D."/>
            <person name="Labutti K."/>
            <person name="Lee E."/>
            <person name="Li S."/>
            <person name="Lovin D.D."/>
            <person name="Mao C."/>
            <person name="Mauceli E."/>
            <person name="Menck C.F."/>
            <person name="Miller J.R."/>
            <person name="Montgomery P."/>
            <person name="Mori A."/>
            <person name="Nascimento A.L."/>
            <person name="Naveira H.F."/>
            <person name="Nusbaum C."/>
            <person name="O'Leary S.B."/>
            <person name="Orvis J."/>
            <person name="Pertea M."/>
            <person name="Quesneville H."/>
            <person name="Reidenbach K.R."/>
            <person name="Rogers Y.-H.C."/>
            <person name="Roth C.W."/>
            <person name="Schneider J.R."/>
            <person name="Schatz M."/>
            <person name="Shumway M."/>
            <person name="Stanke M."/>
            <person name="Stinson E.O."/>
            <person name="Tubio J.M.C."/>
            <person name="Vanzee J.P."/>
            <person name="Verjovski-Almeida S."/>
            <person name="Werner D."/>
            <person name="White O.R."/>
            <person name="Wyder S."/>
            <person name="Zeng Q."/>
            <person name="Zhao Q."/>
            <person name="Zhao Y."/>
            <person name="Hill C.A."/>
            <person name="Raikhel A.S."/>
            <person name="Soares M.B."/>
            <person name="Knudson D.L."/>
            <person name="Lee N.H."/>
            <person name="Galagan J."/>
            <person name="Salzberg S.L."/>
            <person name="Paulsen I.T."/>
            <person name="Dimopoulos G."/>
            <person name="Collins F.H."/>
            <person name="Bruce B."/>
            <person name="Fraser-Liggett C.M."/>
            <person name="Severson D.W."/>
        </authorList>
    </citation>
    <scope>NUCLEOTIDE SEQUENCE [LARGE SCALE GENOMIC DNA]</scope>
    <source>
        <strain>LVPib12</strain>
    </source>
</reference>
<protein>
    <recommendedName>
        <fullName>Mediator of RNA polymerase II transcription subunit 10</fullName>
    </recommendedName>
    <alternativeName>
        <fullName>Mediator complex subunit 10</fullName>
    </alternativeName>
</protein>
<dbReference type="EMBL" id="CH478321">
    <property type="protein sequence ID" value="EAT33233.1"/>
    <property type="molecule type" value="Genomic_DNA"/>
</dbReference>
<dbReference type="SMR" id="Q16G71"/>
<dbReference type="FunCoup" id="Q16G71">
    <property type="interactions" value="1195"/>
</dbReference>
<dbReference type="STRING" id="7159.Q16G71"/>
<dbReference type="PaxDb" id="7159-AAEL014501-PA"/>
<dbReference type="EnsemblMetazoa" id="AAEL014501-RA">
    <property type="protein sequence ID" value="AAEL014501-PA"/>
    <property type="gene ID" value="AAEL014501"/>
</dbReference>
<dbReference type="GeneID" id="5564532"/>
<dbReference type="KEGG" id="aag:5564532"/>
<dbReference type="CTD" id="84246"/>
<dbReference type="VEuPathDB" id="VectorBase:AAEL014501"/>
<dbReference type="eggNOG" id="KOG3046">
    <property type="taxonomic scope" value="Eukaryota"/>
</dbReference>
<dbReference type="HOGENOM" id="CLU_096169_3_0_1"/>
<dbReference type="InParanoid" id="Q16G71"/>
<dbReference type="OMA" id="QYQRAKM"/>
<dbReference type="OrthoDB" id="337270at2759"/>
<dbReference type="PhylomeDB" id="Q16G71"/>
<dbReference type="Proteomes" id="UP000008820">
    <property type="component" value="Chromosome 1"/>
</dbReference>
<dbReference type="Proteomes" id="UP000682892">
    <property type="component" value="Unassembled WGS sequence"/>
</dbReference>
<dbReference type="GO" id="GO:0016592">
    <property type="term" value="C:mediator complex"/>
    <property type="evidence" value="ECO:0007669"/>
    <property type="project" value="InterPro"/>
</dbReference>
<dbReference type="GO" id="GO:0003712">
    <property type="term" value="F:transcription coregulator activity"/>
    <property type="evidence" value="ECO:0007669"/>
    <property type="project" value="InterPro"/>
</dbReference>
<dbReference type="GO" id="GO:0006357">
    <property type="term" value="P:regulation of transcription by RNA polymerase II"/>
    <property type="evidence" value="ECO:0007669"/>
    <property type="project" value="InterPro"/>
</dbReference>
<dbReference type="InterPro" id="IPR019145">
    <property type="entry name" value="Mediator_Med10"/>
</dbReference>
<dbReference type="PANTHER" id="PTHR13345">
    <property type="entry name" value="MEDIATOR OF RNA POLYMERASE II TRANSCRIPTION SUBUNIT 10"/>
    <property type="match status" value="1"/>
</dbReference>
<dbReference type="PANTHER" id="PTHR13345:SF13">
    <property type="entry name" value="MEDIATOR OF RNA POLYMERASE II TRANSCRIPTION SUBUNIT 10"/>
    <property type="match status" value="1"/>
</dbReference>
<dbReference type="Pfam" id="PF09748">
    <property type="entry name" value="Med10"/>
    <property type="match status" value="1"/>
</dbReference>
<feature type="chain" id="PRO_0000303158" description="Mediator of RNA polymerase II transcription subunit 10">
    <location>
        <begin position="1"/>
        <end position="130"/>
    </location>
</feature>
<name>MED10_AEDAE</name>
<accession>Q16G71</accession>
<comment type="function">
    <text evidence="1">Component of the Mediator complex, a coactivator involved in the regulated transcription of nearly all RNA polymerase II-dependent genes. Mediator functions as a bridge to convey information from gene-specific regulatory proteins to the basal RNA polymerase II transcription machinery. Mediator is recruited to promoters by direct interactions with regulatory proteins and serves as a scaffold for the assembly of a functional preinitiation complex with RNA polymerase II and the general transcription factors (By similarity).</text>
</comment>
<comment type="subunit">
    <text evidence="1">Component of the Mediator complex.</text>
</comment>
<comment type="subcellular location">
    <subcellularLocation>
        <location evidence="2">Nucleus</location>
    </subcellularLocation>
</comment>
<comment type="similarity">
    <text evidence="2">Belongs to the Mediator complex subunit 10 family.</text>
</comment>